<evidence type="ECO:0000269" key="1">
    <source>
    </source>
</evidence>
<evidence type="ECO:0000303" key="2">
    <source>
    </source>
</evidence>
<evidence type="ECO:0000312" key="3">
    <source>
        <dbReference type="EMBL" id="ARM37809.1"/>
    </source>
</evidence>
<evidence type="ECO:0007744" key="4">
    <source>
        <dbReference type="PDB" id="6OJ0"/>
    </source>
</evidence>
<protein>
    <recommendedName>
        <fullName>Capsid protein VP10</fullName>
    </recommendedName>
</protein>
<comment type="function">
    <text evidence="1">VP10 self-assembles, together with capsid protein VP4, to form an icosahedral caspid of 87 nm in diameter, with a T=43 symmetry and composed of 420 hexamers and 12 pentamers (PubMed:31636205). VP4 proteins arrange into hexons, while VP10 proteins form the pentameric densities located at the 5-fold axes in the virion (PubMed:31636205). The stoichiometry of VP4:VP10 is 42:1 (PubMed:31636205).</text>
</comment>
<comment type="subcellular location">
    <subcellularLocation>
        <location evidence="1">Virion</location>
    </subcellularLocation>
</comment>
<organism>
    <name type="scientific">Sulfolobus polyhedral virus 1</name>
    <name type="common">SPV1</name>
    <dbReference type="NCBI Taxonomy" id="1982658"/>
    <lineage>
        <taxon>Viruses</taxon>
        <taxon>Viruses incertae sedis</taxon>
        <taxon>Portogloboviridae</taxon>
        <taxon>Alphaportoglobovirus</taxon>
        <taxon>Sulfolobus alphaportoglobovirus 1</taxon>
    </lineage>
</organism>
<gene>
    <name evidence="2" type="ORF">ORF27</name>
</gene>
<keyword id="KW-0002">3D-structure</keyword>
<keyword id="KW-0167">Capsid protein</keyword>
<keyword id="KW-1015">Disulfide bond</keyword>
<keyword id="KW-1185">Reference proteome</keyword>
<keyword id="KW-0946">Virion</keyword>
<name>CAPS2_SPV1</name>
<proteinExistence type="evidence at protein level"/>
<sequence>MLSLDNYSYVHNITTQTNIDLSSQQTIHLASINGKGYIIFLRFFCEGSSACFTNVKFSVKANGLVLYSFRYIQLLELGQAIATAIPSSSQGFSTLLSNYNVLISSPIGTLPQLTLYDSYDNRYGAMLQPAFPLPFVNTLSLDVDILPVSQSSYDPIPYSLNDNQISTNAPTGKGNISIEYLLYNCLV</sequence>
<accession>A0A1W6I162</accession>
<organismHost>
    <name type="scientific">Sulfolobus</name>
    <dbReference type="NCBI Taxonomy" id="2284"/>
</organismHost>
<reference key="1">
    <citation type="journal article" date="2017" name="J. Virol.">
        <title>A novel type of polyhedral viruses infecting hyperthermophilic archaea.</title>
        <authorList>
            <person name="Liu Y."/>
            <person name="Ishino S."/>
            <person name="Ishino Y."/>
            <person name="Pehau-Arnaudet G."/>
            <person name="Krupovic M."/>
            <person name="Prangishvili D."/>
        </authorList>
    </citation>
    <scope>NUCLEOTIDE SEQUENCE [LARGE SCALE GENOMIC DNA]</scope>
    <source>
        <strain evidence="3">S14</strain>
    </source>
</reference>
<reference key="2">
    <citation type="journal article" date="2019" name="Proc. Natl. Acad. Sci. U.S.A.">
        <title>A packing for A-form DNA in an icosahedral virus.</title>
        <authorList>
            <person name="Wang F."/>
            <person name="Liu Y."/>
            <person name="Su Z."/>
            <person name="Osinski T."/>
            <person name="de Oliveira G.A.P."/>
            <person name="Conway J.F."/>
            <person name="Schouten S."/>
            <person name="Krupovic M."/>
            <person name="Prangishvili D."/>
            <person name="Egelman E.H."/>
        </authorList>
    </citation>
    <scope>STRUCTURE BY ELECTRON MICROSCOPY (3.70 ANGSTROMS)</scope>
    <scope>DISULFIDE BONDS</scope>
    <scope>FUNCTION</scope>
    <scope>SUBCELLULAR LOCATION</scope>
</reference>
<feature type="chain" id="PRO_0000453899" description="Capsid protein VP10">
    <location>
        <begin position="1"/>
        <end position="187"/>
    </location>
</feature>
<feature type="disulfide bond" evidence="4">
    <location>
        <begin position="45"/>
        <end position="51"/>
    </location>
</feature>
<dbReference type="EMBL" id="KY780159">
    <property type="protein sequence ID" value="ARM37809.1"/>
    <property type="molecule type" value="Genomic_DNA"/>
</dbReference>
<dbReference type="PDB" id="6OJ0">
    <property type="method" value="EM"/>
    <property type="resolution" value="3.70 A"/>
    <property type="chains" value="Z=1-187"/>
</dbReference>
<dbReference type="PDBsum" id="6OJ0"/>
<dbReference type="EMDB" id="EMD-20083"/>
<dbReference type="SMR" id="A0A1W6I162"/>
<dbReference type="Proteomes" id="UP000224527">
    <property type="component" value="Segment"/>
</dbReference>
<dbReference type="GO" id="GO:0019030">
    <property type="term" value="C:icosahedral viral capsid"/>
    <property type="evidence" value="ECO:0000314"/>
    <property type="project" value="UniProtKB"/>
</dbReference>